<sequence length="351" mass="38528">MAAAVNSGSSLPLFDCPTWAGKPPPGLHLDVVKGDKLIEKLIIDEKKYYLFGRNPDLCDFTIDHQSCSRVHAALVYHKHLKRVFLIDLNSTHGTFLGHIRLEPHKPQQIPIDSTVSFGASTRAYTLREKPQTLPSAVKGDEKMGGEDDELKGLLGLPEEETELDNLTEFNTAHNKRISTLTIEEGNLDIQRPKRKRKNSRVTFSEDDEIINPEDVDPSVGRFRNMVQTAVVPVKKKRMEGSGSLGLEESGSRRMQNFAFSGGLYGGLPPTHSETGSQPHGIHGTALIGGLPMPYPNLAPDVDLTPVVPSAVAINPTPNPAVYNPEAVNEPKKKKYAKEAWPGKKPTPSLLI</sequence>
<feature type="chain" id="PRO_0000071506" description="Nuclear inhibitor of protein phosphatase 1">
    <location>
        <begin position="1"/>
        <end position="351"/>
    </location>
</feature>
<feature type="domain" description="FHA" evidence="4">
    <location>
        <begin position="49"/>
        <end position="101"/>
    </location>
</feature>
<feature type="region of interest" description="Interaction with CDC5L, SF3B1 and MELK" evidence="1">
    <location>
        <begin position="1"/>
        <end position="142"/>
    </location>
</feature>
<feature type="region of interest" description="Interaction with EED" evidence="1">
    <location>
        <begin position="143"/>
        <end position="224"/>
    </location>
</feature>
<feature type="region of interest" description="Involved in PP-1 inhibition" evidence="1">
    <location>
        <begin position="191"/>
        <end position="200"/>
    </location>
</feature>
<feature type="region of interest" description="Involved in PP-1 binding" evidence="1">
    <location>
        <begin position="200"/>
        <end position="203"/>
    </location>
</feature>
<feature type="region of interest" description="Interaction with EED" evidence="1">
    <location>
        <begin position="310"/>
        <end position="329"/>
    </location>
</feature>
<feature type="region of interest" description="Disordered" evidence="5">
    <location>
        <begin position="314"/>
        <end position="351"/>
    </location>
</feature>
<feature type="region of interest" description="RNA-binding" evidence="1">
    <location>
        <begin position="330"/>
        <end position="351"/>
    </location>
</feature>
<feature type="region of interest" description="Involved in PP-1 inhibition" evidence="1">
    <location>
        <begin position="331"/>
        <end position="337"/>
    </location>
</feature>
<feature type="short sequence motif" description="Nuclear localization signal 1" evidence="1">
    <location>
        <begin position="185"/>
        <end position="209"/>
    </location>
</feature>
<feature type="short sequence motif" description="Nuclear localization signal 2" evidence="1">
    <location>
        <begin position="210"/>
        <end position="240"/>
    </location>
</feature>
<feature type="modified residue" description="Phosphothreonine" evidence="3">
    <location>
        <position position="161"/>
    </location>
</feature>
<feature type="modified residue" description="Phosphoserine" evidence="3">
    <location>
        <position position="178"/>
    </location>
</feature>
<feature type="modified residue" description="Phosphoserine" evidence="3">
    <location>
        <position position="199"/>
    </location>
</feature>
<feature type="modified residue" description="Phosphoserine" evidence="3">
    <location>
        <position position="204"/>
    </location>
</feature>
<feature type="modified residue" description="Phosphoserine" evidence="2">
    <location>
        <position position="249"/>
    </location>
</feature>
<feature type="modified residue" description="Phosphotyrosine" evidence="2">
    <location>
        <position position="264"/>
    </location>
</feature>
<feature type="modified residue" description="Phosphotyrosine" evidence="2">
    <location>
        <position position="335"/>
    </location>
</feature>
<feature type="strand" evidence="10">
    <location>
        <begin position="7"/>
        <end position="9"/>
    </location>
</feature>
<feature type="strand" evidence="10">
    <location>
        <begin position="18"/>
        <end position="20"/>
    </location>
</feature>
<feature type="strand" evidence="10">
    <location>
        <begin position="28"/>
        <end position="41"/>
    </location>
</feature>
<feature type="strand" evidence="10">
    <location>
        <begin position="51"/>
        <end position="53"/>
    </location>
</feature>
<feature type="turn" evidence="10">
    <location>
        <begin position="55"/>
        <end position="57"/>
    </location>
</feature>
<feature type="strand" evidence="10">
    <location>
        <begin position="58"/>
        <end position="60"/>
    </location>
</feature>
<feature type="strand" evidence="10">
    <location>
        <begin position="65"/>
        <end position="67"/>
    </location>
</feature>
<feature type="strand" evidence="10">
    <location>
        <begin position="71"/>
        <end position="80"/>
    </location>
</feature>
<feature type="strand" evidence="10">
    <location>
        <begin position="83"/>
        <end position="86"/>
    </location>
</feature>
<feature type="strand" evidence="10">
    <location>
        <begin position="94"/>
        <end position="98"/>
    </location>
</feature>
<feature type="strand" evidence="10">
    <location>
        <begin position="103"/>
        <end position="105"/>
    </location>
</feature>
<protein>
    <recommendedName>
        <fullName>Nuclear inhibitor of protein phosphatase 1</fullName>
        <shortName>NIPP-1</shortName>
    </recommendedName>
    <alternativeName>
        <fullName>Protein phosphatase 1 regulatory inhibitor subunit 8</fullName>
    </alternativeName>
</protein>
<evidence type="ECO:0000250" key="1"/>
<evidence type="ECO:0000250" key="2">
    <source>
        <dbReference type="UniProtKB" id="Q12972"/>
    </source>
</evidence>
<evidence type="ECO:0000250" key="3">
    <source>
        <dbReference type="UniProtKB" id="Q28147"/>
    </source>
</evidence>
<evidence type="ECO:0000255" key="4">
    <source>
        <dbReference type="PROSITE-ProRule" id="PRU00086"/>
    </source>
</evidence>
<evidence type="ECO:0000256" key="5">
    <source>
        <dbReference type="SAM" id="MobiDB-lite"/>
    </source>
</evidence>
<evidence type="ECO:0000269" key="6">
    <source>
    </source>
</evidence>
<evidence type="ECO:0000269" key="7">
    <source>
    </source>
</evidence>
<evidence type="ECO:0000269" key="8">
    <source>
    </source>
</evidence>
<evidence type="ECO:0000269" key="9">
    <source>
    </source>
</evidence>
<evidence type="ECO:0007829" key="10">
    <source>
        <dbReference type="PDB" id="2JPE"/>
    </source>
</evidence>
<reference key="1">
    <citation type="journal article" date="2004" name="Genome Res.">
        <title>The status, quality, and expansion of the NIH full-length cDNA project: the Mammalian Gene Collection (MGC).</title>
        <authorList>
            <consortium name="The MGC Project Team"/>
        </authorList>
    </citation>
    <scope>NUCLEOTIDE SEQUENCE [LARGE SCALE MRNA]</scope>
    <source>
        <strain>FVB/N</strain>
        <tissue>Mammary tumor</tissue>
    </source>
</reference>
<reference key="2">
    <citation type="journal article" date="2005" name="Science">
        <title>The transcriptional landscape of the mammalian genome.</title>
        <authorList>
            <person name="Carninci P."/>
            <person name="Kasukawa T."/>
            <person name="Katayama S."/>
            <person name="Gough J."/>
            <person name="Frith M.C."/>
            <person name="Maeda N."/>
            <person name="Oyama R."/>
            <person name="Ravasi T."/>
            <person name="Lenhard B."/>
            <person name="Wells C."/>
            <person name="Kodzius R."/>
            <person name="Shimokawa K."/>
            <person name="Bajic V.B."/>
            <person name="Brenner S.E."/>
            <person name="Batalov S."/>
            <person name="Forrest A.R."/>
            <person name="Zavolan M."/>
            <person name="Davis M.J."/>
            <person name="Wilming L.G."/>
            <person name="Aidinis V."/>
            <person name="Allen J.E."/>
            <person name="Ambesi-Impiombato A."/>
            <person name="Apweiler R."/>
            <person name="Aturaliya R.N."/>
            <person name="Bailey T.L."/>
            <person name="Bansal M."/>
            <person name="Baxter L."/>
            <person name="Beisel K.W."/>
            <person name="Bersano T."/>
            <person name="Bono H."/>
            <person name="Chalk A.M."/>
            <person name="Chiu K.P."/>
            <person name="Choudhary V."/>
            <person name="Christoffels A."/>
            <person name="Clutterbuck D.R."/>
            <person name="Crowe M.L."/>
            <person name="Dalla E."/>
            <person name="Dalrymple B.P."/>
            <person name="de Bono B."/>
            <person name="Della Gatta G."/>
            <person name="di Bernardo D."/>
            <person name="Down T."/>
            <person name="Engstrom P."/>
            <person name="Fagiolini M."/>
            <person name="Faulkner G."/>
            <person name="Fletcher C.F."/>
            <person name="Fukushima T."/>
            <person name="Furuno M."/>
            <person name="Futaki S."/>
            <person name="Gariboldi M."/>
            <person name="Georgii-Hemming P."/>
            <person name="Gingeras T.R."/>
            <person name="Gojobori T."/>
            <person name="Green R.E."/>
            <person name="Gustincich S."/>
            <person name="Harbers M."/>
            <person name="Hayashi Y."/>
            <person name="Hensch T.K."/>
            <person name="Hirokawa N."/>
            <person name="Hill D."/>
            <person name="Huminiecki L."/>
            <person name="Iacono M."/>
            <person name="Ikeo K."/>
            <person name="Iwama A."/>
            <person name="Ishikawa T."/>
            <person name="Jakt M."/>
            <person name="Kanapin A."/>
            <person name="Katoh M."/>
            <person name="Kawasawa Y."/>
            <person name="Kelso J."/>
            <person name="Kitamura H."/>
            <person name="Kitano H."/>
            <person name="Kollias G."/>
            <person name="Krishnan S.P."/>
            <person name="Kruger A."/>
            <person name="Kummerfeld S.K."/>
            <person name="Kurochkin I.V."/>
            <person name="Lareau L.F."/>
            <person name="Lazarevic D."/>
            <person name="Lipovich L."/>
            <person name="Liu J."/>
            <person name="Liuni S."/>
            <person name="McWilliam S."/>
            <person name="Madan Babu M."/>
            <person name="Madera M."/>
            <person name="Marchionni L."/>
            <person name="Matsuda H."/>
            <person name="Matsuzawa S."/>
            <person name="Miki H."/>
            <person name="Mignone F."/>
            <person name="Miyake S."/>
            <person name="Morris K."/>
            <person name="Mottagui-Tabar S."/>
            <person name="Mulder N."/>
            <person name="Nakano N."/>
            <person name="Nakauchi H."/>
            <person name="Ng P."/>
            <person name="Nilsson R."/>
            <person name="Nishiguchi S."/>
            <person name="Nishikawa S."/>
            <person name="Nori F."/>
            <person name="Ohara O."/>
            <person name="Okazaki Y."/>
            <person name="Orlando V."/>
            <person name="Pang K.C."/>
            <person name="Pavan W.J."/>
            <person name="Pavesi G."/>
            <person name="Pesole G."/>
            <person name="Petrovsky N."/>
            <person name="Piazza S."/>
            <person name="Reed J."/>
            <person name="Reid J.F."/>
            <person name="Ring B.Z."/>
            <person name="Ringwald M."/>
            <person name="Rost B."/>
            <person name="Ruan Y."/>
            <person name="Salzberg S.L."/>
            <person name="Sandelin A."/>
            <person name="Schneider C."/>
            <person name="Schoenbach C."/>
            <person name="Sekiguchi K."/>
            <person name="Semple C.A."/>
            <person name="Seno S."/>
            <person name="Sessa L."/>
            <person name="Sheng Y."/>
            <person name="Shibata Y."/>
            <person name="Shimada H."/>
            <person name="Shimada K."/>
            <person name="Silva D."/>
            <person name="Sinclair B."/>
            <person name="Sperling S."/>
            <person name="Stupka E."/>
            <person name="Sugiura K."/>
            <person name="Sultana R."/>
            <person name="Takenaka Y."/>
            <person name="Taki K."/>
            <person name="Tammoja K."/>
            <person name="Tan S.L."/>
            <person name="Tang S."/>
            <person name="Taylor M.S."/>
            <person name="Tegner J."/>
            <person name="Teichmann S.A."/>
            <person name="Ueda H.R."/>
            <person name="van Nimwegen E."/>
            <person name="Verardo R."/>
            <person name="Wei C.L."/>
            <person name="Yagi K."/>
            <person name="Yamanishi H."/>
            <person name="Zabarovsky E."/>
            <person name="Zhu S."/>
            <person name="Zimmer A."/>
            <person name="Hide W."/>
            <person name="Bult C."/>
            <person name="Grimmond S.M."/>
            <person name="Teasdale R.D."/>
            <person name="Liu E.T."/>
            <person name="Brusic V."/>
            <person name="Quackenbush J."/>
            <person name="Wahlestedt C."/>
            <person name="Mattick J.S."/>
            <person name="Hume D.A."/>
            <person name="Kai C."/>
            <person name="Sasaki D."/>
            <person name="Tomaru Y."/>
            <person name="Fukuda S."/>
            <person name="Kanamori-Katayama M."/>
            <person name="Suzuki M."/>
            <person name="Aoki J."/>
            <person name="Arakawa T."/>
            <person name="Iida J."/>
            <person name="Imamura K."/>
            <person name="Itoh M."/>
            <person name="Kato T."/>
            <person name="Kawaji H."/>
            <person name="Kawagashira N."/>
            <person name="Kawashima T."/>
            <person name="Kojima M."/>
            <person name="Kondo S."/>
            <person name="Konno H."/>
            <person name="Nakano K."/>
            <person name="Ninomiya N."/>
            <person name="Nishio T."/>
            <person name="Okada M."/>
            <person name="Plessy C."/>
            <person name="Shibata K."/>
            <person name="Shiraki T."/>
            <person name="Suzuki S."/>
            <person name="Tagami M."/>
            <person name="Waki K."/>
            <person name="Watahiki A."/>
            <person name="Okamura-Oho Y."/>
            <person name="Suzuki H."/>
            <person name="Kawai J."/>
            <person name="Hayashizaki Y."/>
        </authorList>
    </citation>
    <scope>NUCLEOTIDE SEQUENCE [LARGE SCALE MRNA] OF 46-351</scope>
    <source>
        <strain>C57BL/6J</strain>
        <tissue>Medulla oblongata</tissue>
    </source>
</reference>
<reference key="3">
    <citation type="journal article" date="2003" name="J. Biol. Chem.">
        <title>The protein phosphatase-1 (PP1) regulator, nuclear inhibitor of PP1 (NIPP1), interacts with the polycomb group protein, embryonic ectoderm development (EED), and functions as a transcriptional repressor.</title>
        <authorList>
            <person name="Jin Q."/>
            <person name="van Eynde A."/>
            <person name="Beullens M."/>
            <person name="Roy N."/>
            <person name="Thiel G."/>
            <person name="Stalmans W."/>
            <person name="Bollen M."/>
        </authorList>
    </citation>
    <scope>INTERACTION WITH EED</scope>
    <scope>IDENTIFICATION IN A COMPLEX WITH EED; HDAC2 AND PP1</scope>
</reference>
<reference key="4">
    <citation type="journal article" date="2004" name="J. Biol. Chem.">
        <title>Interactor-mediated nuclear translocation and retention of protein phosphatase-1.</title>
        <authorList>
            <person name="Lesage B."/>
            <person name="Beullens M."/>
            <person name="Nuytten M."/>
            <person name="Van Eynde A."/>
            <person name="Keppens S."/>
            <person name="Himpens B."/>
            <person name="Bollen M."/>
        </authorList>
    </citation>
    <scope>FUNCTION</scope>
</reference>
<reference key="5">
    <citation type="journal article" date="2004" name="Mol. Cell. Biol.">
        <title>The nuclear scaffold protein NIPP1 is essential for early embryonic development and cell proliferation.</title>
        <authorList>
            <person name="Van Eynde A."/>
            <person name="Nuytten M."/>
            <person name="Dewerchin M."/>
            <person name="Schoonjans L."/>
            <person name="Keppens S."/>
            <person name="Beullens M."/>
            <person name="Moons L."/>
            <person name="Carmeliet P."/>
            <person name="Stalmans W."/>
            <person name="Bollen M."/>
        </authorList>
    </citation>
    <scope>FUNCTION</scope>
    <scope>DISRUPTION PHENOTYPE</scope>
</reference>
<reference key="6">
    <citation type="journal article" date="2010" name="Cell">
        <title>A tissue-specific atlas of mouse protein phosphorylation and expression.</title>
        <authorList>
            <person name="Huttlin E.L."/>
            <person name="Jedrychowski M.P."/>
            <person name="Elias J.E."/>
            <person name="Goswami T."/>
            <person name="Rad R."/>
            <person name="Beausoleil S.A."/>
            <person name="Villen J."/>
            <person name="Haas W."/>
            <person name="Sowa M.E."/>
            <person name="Gygi S.P."/>
        </authorList>
    </citation>
    <scope>IDENTIFICATION BY MASS SPECTROMETRY [LARGE SCALE ANALYSIS]</scope>
    <source>
        <tissue>Spleen</tissue>
        <tissue>Testis</tissue>
    </source>
</reference>
<reference key="7">
    <citation type="journal article" date="2008" name="J. Biomol. NMR">
        <title>The NMR structure of the NIPP1 FHA domain.</title>
        <authorList>
            <person name="Kumeta H."/>
            <person name="Ogura K."/>
            <person name="Adachi S."/>
            <person name="Fujioka Y."/>
            <person name="Tanuma N."/>
            <person name="Kikuchi K."/>
            <person name="Inagaki F."/>
        </authorList>
    </citation>
    <scope>STRUCTURE BY NMR OF 1-132</scope>
    <scope>DOMAIN FHA</scope>
    <scope>INTERACTION WITH MELK</scope>
</reference>
<organism>
    <name type="scientific">Mus musculus</name>
    <name type="common">Mouse</name>
    <dbReference type="NCBI Taxonomy" id="10090"/>
    <lineage>
        <taxon>Eukaryota</taxon>
        <taxon>Metazoa</taxon>
        <taxon>Chordata</taxon>
        <taxon>Craniata</taxon>
        <taxon>Vertebrata</taxon>
        <taxon>Euteleostomi</taxon>
        <taxon>Mammalia</taxon>
        <taxon>Eutheria</taxon>
        <taxon>Euarchontoglires</taxon>
        <taxon>Glires</taxon>
        <taxon>Rodentia</taxon>
        <taxon>Myomorpha</taxon>
        <taxon>Muroidea</taxon>
        <taxon>Muridae</taxon>
        <taxon>Murinae</taxon>
        <taxon>Mus</taxon>
        <taxon>Mus</taxon>
    </lineage>
</organism>
<accession>Q8R3G1</accession>
<accession>Q8C087</accession>
<dbReference type="EMBL" id="BC025479">
    <property type="protein sequence ID" value="AAH25479.1"/>
    <property type="molecule type" value="mRNA"/>
</dbReference>
<dbReference type="EMBL" id="AK032022">
    <property type="protein sequence ID" value="BAC27653.1"/>
    <property type="molecule type" value="mRNA"/>
</dbReference>
<dbReference type="CCDS" id="CCDS18736.1"/>
<dbReference type="RefSeq" id="NP_001277654.1">
    <property type="nucleotide sequence ID" value="NM_001290725.1"/>
</dbReference>
<dbReference type="RefSeq" id="NP_666266.1">
    <property type="nucleotide sequence ID" value="NM_146154.3"/>
</dbReference>
<dbReference type="PDB" id="2JPE">
    <property type="method" value="NMR"/>
    <property type="chains" value="A=1-132"/>
</dbReference>
<dbReference type="PDBsum" id="2JPE"/>
<dbReference type="BMRB" id="Q8R3G1"/>
<dbReference type="SMR" id="Q8R3G1"/>
<dbReference type="BioGRID" id="221435">
    <property type="interactions" value="8"/>
</dbReference>
<dbReference type="FunCoup" id="Q8R3G1">
    <property type="interactions" value="5258"/>
</dbReference>
<dbReference type="IntAct" id="Q8R3G1">
    <property type="interactions" value="1"/>
</dbReference>
<dbReference type="STRING" id="10090.ENSMUSP00000030702"/>
<dbReference type="GlyGen" id="Q8R3G1">
    <property type="glycosylation" value="1 site"/>
</dbReference>
<dbReference type="iPTMnet" id="Q8R3G1"/>
<dbReference type="PhosphoSitePlus" id="Q8R3G1"/>
<dbReference type="SwissPalm" id="Q8R3G1"/>
<dbReference type="jPOST" id="Q8R3G1"/>
<dbReference type="PaxDb" id="10090-ENSMUSP00000030702"/>
<dbReference type="ProteomicsDB" id="291774"/>
<dbReference type="Pumba" id="Q8R3G1"/>
<dbReference type="Antibodypedia" id="16435">
    <property type="antibodies" value="426 antibodies from 37 providers"/>
</dbReference>
<dbReference type="DNASU" id="100336"/>
<dbReference type="Ensembl" id="ENSMUST00000030702.14">
    <property type="protein sequence ID" value="ENSMUSP00000030702.8"/>
    <property type="gene ID" value="ENSMUSG00000028882.14"/>
</dbReference>
<dbReference type="GeneID" id="100336"/>
<dbReference type="KEGG" id="mmu:100336"/>
<dbReference type="UCSC" id="uc008vbw.3">
    <property type="organism name" value="mouse"/>
</dbReference>
<dbReference type="AGR" id="MGI:2140494"/>
<dbReference type="CTD" id="5511"/>
<dbReference type="MGI" id="MGI:2140494">
    <property type="gene designation" value="Ppp1r8"/>
</dbReference>
<dbReference type="VEuPathDB" id="HostDB:ENSMUSG00000028882"/>
<dbReference type="eggNOG" id="KOG1880">
    <property type="taxonomic scope" value="Eukaryota"/>
</dbReference>
<dbReference type="GeneTree" id="ENSGT00940000156115"/>
<dbReference type="HOGENOM" id="CLU_069628_0_0_1"/>
<dbReference type="InParanoid" id="Q8R3G1"/>
<dbReference type="OMA" id="HREMPPP"/>
<dbReference type="OrthoDB" id="4096268at2759"/>
<dbReference type="PhylomeDB" id="Q8R3G1"/>
<dbReference type="TreeFam" id="TF105539"/>
<dbReference type="BioGRID-ORCS" id="100336">
    <property type="hits" value="31 hits in 83 CRISPR screens"/>
</dbReference>
<dbReference type="ChiTaRS" id="Ppp1r8">
    <property type="organism name" value="mouse"/>
</dbReference>
<dbReference type="EvolutionaryTrace" id="Q8R3G1"/>
<dbReference type="PRO" id="PR:Q8R3G1"/>
<dbReference type="Proteomes" id="UP000000589">
    <property type="component" value="Chromosome 4"/>
</dbReference>
<dbReference type="RNAct" id="Q8R3G1">
    <property type="molecule type" value="protein"/>
</dbReference>
<dbReference type="Bgee" id="ENSMUSG00000028882">
    <property type="expression patterns" value="Expressed in optic fissure and 253 other cell types or tissues"/>
</dbReference>
<dbReference type="ExpressionAtlas" id="Q8R3G1">
    <property type="expression patterns" value="baseline and differential"/>
</dbReference>
<dbReference type="GO" id="GO:0016607">
    <property type="term" value="C:nuclear speck"/>
    <property type="evidence" value="ECO:0007669"/>
    <property type="project" value="UniProtKB-SubCell"/>
</dbReference>
<dbReference type="GO" id="GO:0005681">
    <property type="term" value="C:spliceosomal complex"/>
    <property type="evidence" value="ECO:0007669"/>
    <property type="project" value="UniProtKB-KW"/>
</dbReference>
<dbReference type="GO" id="GO:0003677">
    <property type="term" value="F:DNA binding"/>
    <property type="evidence" value="ECO:0007669"/>
    <property type="project" value="UniProtKB-KW"/>
</dbReference>
<dbReference type="GO" id="GO:0004864">
    <property type="term" value="F:protein phosphatase inhibitor activity"/>
    <property type="evidence" value="ECO:0007669"/>
    <property type="project" value="UniProtKB-KW"/>
</dbReference>
<dbReference type="GO" id="GO:0019888">
    <property type="term" value="F:protein phosphatase regulator activity"/>
    <property type="evidence" value="ECO:0000314"/>
    <property type="project" value="MGI"/>
</dbReference>
<dbReference type="GO" id="GO:0003723">
    <property type="term" value="F:RNA binding"/>
    <property type="evidence" value="ECO:0007669"/>
    <property type="project" value="UniProtKB-KW"/>
</dbReference>
<dbReference type="GO" id="GO:0008283">
    <property type="term" value="P:cell population proliferation"/>
    <property type="evidence" value="ECO:0000315"/>
    <property type="project" value="MGI"/>
</dbReference>
<dbReference type="GO" id="GO:0006397">
    <property type="term" value="P:mRNA processing"/>
    <property type="evidence" value="ECO:0007669"/>
    <property type="project" value="UniProtKB-KW"/>
</dbReference>
<dbReference type="GO" id="GO:0008380">
    <property type="term" value="P:RNA splicing"/>
    <property type="evidence" value="ECO:0007669"/>
    <property type="project" value="UniProtKB-KW"/>
</dbReference>
<dbReference type="CDD" id="cd22674">
    <property type="entry name" value="FHA_PPP1R8"/>
    <property type="match status" value="1"/>
</dbReference>
<dbReference type="FunFam" id="2.60.200.20:FF:000012">
    <property type="entry name" value="Nuclear inhibitor of protein phosphatase 1"/>
    <property type="match status" value="1"/>
</dbReference>
<dbReference type="Gene3D" id="2.60.200.20">
    <property type="match status" value="1"/>
</dbReference>
<dbReference type="Gene3D" id="6.10.250.1290">
    <property type="match status" value="1"/>
</dbReference>
<dbReference type="InterPro" id="IPR050923">
    <property type="entry name" value="Cell_Proc_Reg/RNA_Proc"/>
</dbReference>
<dbReference type="InterPro" id="IPR000253">
    <property type="entry name" value="FHA_dom"/>
</dbReference>
<dbReference type="InterPro" id="IPR008984">
    <property type="entry name" value="SMAD_FHA_dom_sf"/>
</dbReference>
<dbReference type="PANTHER" id="PTHR23308">
    <property type="entry name" value="NUCLEAR INHIBITOR OF PROTEIN PHOSPHATASE-1"/>
    <property type="match status" value="1"/>
</dbReference>
<dbReference type="Pfam" id="PF00498">
    <property type="entry name" value="FHA"/>
    <property type="match status" value="1"/>
</dbReference>
<dbReference type="SMART" id="SM00240">
    <property type="entry name" value="FHA"/>
    <property type="match status" value="1"/>
</dbReference>
<dbReference type="SUPFAM" id="SSF49879">
    <property type="entry name" value="SMAD/FHA domain"/>
    <property type="match status" value="1"/>
</dbReference>
<dbReference type="PROSITE" id="PS50006">
    <property type="entry name" value="FHA_DOMAIN"/>
    <property type="match status" value="1"/>
</dbReference>
<comment type="function">
    <text evidence="7 8">Inhibitor subunit of the major nuclear protein phosphatase-1 (PP-1). It has RNA-binding activity but does not cleave RNA and may target PP-1 to RNA-associated substrates. May also be involved in pre-mRNA splicing. Binds DNA and might act as a transcriptional repressor. Essential for cell proliferation and early embryonic development.</text>
</comment>
<comment type="subunit">
    <text evidence="1 6 9">Interacts with phosphorylated CDC5L, SF3B1 and MELK. Part of the spliceosome. Interacts with PPP1CA, PPP1CB and PPP1CC (By similarity). Interacts with EED. Part of a complex consisting of PPP1R8, EED, HDAC2 and PP-1.</text>
</comment>
<comment type="subcellular location">
    <subcellularLocation>
        <location evidence="1">Nucleus</location>
    </subcellularLocation>
    <subcellularLocation>
        <location evidence="1">Nucleus speckle</location>
    </subcellularLocation>
    <text>Mainly, but not exclusively, nuclear.</text>
</comment>
<comment type="domain">
    <text evidence="9">Has a basic N- and C-terminal and an acidic central domain.</text>
</comment>
<comment type="domain">
    <text evidence="9">The FHA domain mediates interactions with threonine-phosphorylated MELK.</text>
</comment>
<comment type="PTM">
    <text evidence="1">May be inactivated by phosphorylation on Ser-199 or Ser-204.</text>
</comment>
<comment type="disruption phenotype">
    <text evidence="7">Mice display a retarded growth and embryonic lethality at E6.5, due to defects in proliferation rate.</text>
</comment>
<name>PP1R8_MOUSE</name>
<proteinExistence type="evidence at protein level"/>
<keyword id="KW-0002">3D-structure</keyword>
<keyword id="KW-0217">Developmental protein</keyword>
<keyword id="KW-0238">DNA-binding</keyword>
<keyword id="KW-0507">mRNA processing</keyword>
<keyword id="KW-0508">mRNA splicing</keyword>
<keyword id="KW-0539">Nucleus</keyword>
<keyword id="KW-0597">Phosphoprotein</keyword>
<keyword id="KW-0650">Protein phosphatase inhibitor</keyword>
<keyword id="KW-1185">Reference proteome</keyword>
<keyword id="KW-0678">Repressor</keyword>
<keyword id="KW-0694">RNA-binding</keyword>
<keyword id="KW-0747">Spliceosome</keyword>
<keyword id="KW-0804">Transcription</keyword>
<keyword id="KW-0805">Transcription regulation</keyword>
<gene>
    <name type="primary">Ppp1r8</name>
    <name type="synonym">Nipp1</name>
</gene>